<proteinExistence type="inferred from homology"/>
<sequence length="68" mass="8030">MQVSVRDNNVDQALRALKKKLQREGVFREMKLKQHYEKPSEKKAREKAEAIRRARKLARKKAQREGGL</sequence>
<keyword id="KW-1185">Reference proteome</keyword>
<keyword id="KW-0687">Ribonucleoprotein</keyword>
<keyword id="KW-0689">Ribosomal protein</keyword>
<accession>A8LLI5</accession>
<feature type="chain" id="PRO_1000079405" description="Small ribosomal subunit protein bS21">
    <location>
        <begin position="1"/>
        <end position="68"/>
    </location>
</feature>
<reference key="1">
    <citation type="journal article" date="2010" name="ISME J.">
        <title>The complete genome sequence of the algal symbiont Dinoroseobacter shibae: a hitchhiker's guide to life in the sea.</title>
        <authorList>
            <person name="Wagner-Dobler I."/>
            <person name="Ballhausen B."/>
            <person name="Berger M."/>
            <person name="Brinkhoff T."/>
            <person name="Buchholz I."/>
            <person name="Bunk B."/>
            <person name="Cypionka H."/>
            <person name="Daniel R."/>
            <person name="Drepper T."/>
            <person name="Gerdts G."/>
            <person name="Hahnke S."/>
            <person name="Han C."/>
            <person name="Jahn D."/>
            <person name="Kalhoefer D."/>
            <person name="Kiss H."/>
            <person name="Klenk H.P."/>
            <person name="Kyrpides N."/>
            <person name="Liebl W."/>
            <person name="Liesegang H."/>
            <person name="Meincke L."/>
            <person name="Pati A."/>
            <person name="Petersen J."/>
            <person name="Piekarski T."/>
            <person name="Pommerenke C."/>
            <person name="Pradella S."/>
            <person name="Pukall R."/>
            <person name="Rabus R."/>
            <person name="Stackebrandt E."/>
            <person name="Thole S."/>
            <person name="Thompson L."/>
            <person name="Tielen P."/>
            <person name="Tomasch J."/>
            <person name="von Jan M."/>
            <person name="Wanphrut N."/>
            <person name="Wichels A."/>
            <person name="Zech H."/>
            <person name="Simon M."/>
        </authorList>
    </citation>
    <scope>NUCLEOTIDE SEQUENCE [LARGE SCALE GENOMIC DNA]</scope>
    <source>
        <strain>DSM 16493 / NCIMB 14021 / DFL 12</strain>
    </source>
</reference>
<organism>
    <name type="scientific">Dinoroseobacter shibae (strain DSM 16493 / NCIMB 14021 / DFL 12)</name>
    <dbReference type="NCBI Taxonomy" id="398580"/>
    <lineage>
        <taxon>Bacteria</taxon>
        <taxon>Pseudomonadati</taxon>
        <taxon>Pseudomonadota</taxon>
        <taxon>Alphaproteobacteria</taxon>
        <taxon>Rhodobacterales</taxon>
        <taxon>Roseobacteraceae</taxon>
        <taxon>Dinoroseobacter</taxon>
    </lineage>
</organism>
<name>RS21_DINSH</name>
<dbReference type="EMBL" id="CP000830">
    <property type="protein sequence ID" value="ABV91995.1"/>
    <property type="molecule type" value="Genomic_DNA"/>
</dbReference>
<dbReference type="RefSeq" id="WP_012176928.1">
    <property type="nucleotide sequence ID" value="NC_009952.1"/>
</dbReference>
<dbReference type="SMR" id="A8LLI5"/>
<dbReference type="STRING" id="398580.Dshi_0246"/>
<dbReference type="KEGG" id="dsh:Dshi_0246"/>
<dbReference type="eggNOG" id="COG0828">
    <property type="taxonomic scope" value="Bacteria"/>
</dbReference>
<dbReference type="HOGENOM" id="CLU_159258_0_1_5"/>
<dbReference type="OrthoDB" id="9811907at2"/>
<dbReference type="Proteomes" id="UP000006833">
    <property type="component" value="Chromosome"/>
</dbReference>
<dbReference type="GO" id="GO:1990904">
    <property type="term" value="C:ribonucleoprotein complex"/>
    <property type="evidence" value="ECO:0007669"/>
    <property type="project" value="UniProtKB-KW"/>
</dbReference>
<dbReference type="GO" id="GO:0005840">
    <property type="term" value="C:ribosome"/>
    <property type="evidence" value="ECO:0007669"/>
    <property type="project" value="UniProtKB-KW"/>
</dbReference>
<dbReference type="GO" id="GO:0003735">
    <property type="term" value="F:structural constituent of ribosome"/>
    <property type="evidence" value="ECO:0007669"/>
    <property type="project" value="InterPro"/>
</dbReference>
<dbReference type="GO" id="GO:0006412">
    <property type="term" value="P:translation"/>
    <property type="evidence" value="ECO:0007669"/>
    <property type="project" value="UniProtKB-UniRule"/>
</dbReference>
<dbReference type="Gene3D" id="1.20.5.1150">
    <property type="entry name" value="Ribosomal protein S8"/>
    <property type="match status" value="1"/>
</dbReference>
<dbReference type="HAMAP" id="MF_00358">
    <property type="entry name" value="Ribosomal_bS21"/>
    <property type="match status" value="1"/>
</dbReference>
<dbReference type="InterPro" id="IPR001911">
    <property type="entry name" value="Ribosomal_bS21"/>
</dbReference>
<dbReference type="InterPro" id="IPR018278">
    <property type="entry name" value="Ribosomal_bS21_CS"/>
</dbReference>
<dbReference type="InterPro" id="IPR038380">
    <property type="entry name" value="Ribosomal_bS21_sf"/>
</dbReference>
<dbReference type="NCBIfam" id="TIGR00030">
    <property type="entry name" value="S21p"/>
    <property type="match status" value="1"/>
</dbReference>
<dbReference type="PANTHER" id="PTHR21109">
    <property type="entry name" value="MITOCHONDRIAL 28S RIBOSOMAL PROTEIN S21"/>
    <property type="match status" value="1"/>
</dbReference>
<dbReference type="PANTHER" id="PTHR21109:SF0">
    <property type="entry name" value="SMALL RIBOSOMAL SUBUNIT PROTEIN BS21M"/>
    <property type="match status" value="1"/>
</dbReference>
<dbReference type="Pfam" id="PF01165">
    <property type="entry name" value="Ribosomal_S21"/>
    <property type="match status" value="1"/>
</dbReference>
<dbReference type="PROSITE" id="PS01181">
    <property type="entry name" value="RIBOSOMAL_S21"/>
    <property type="match status" value="1"/>
</dbReference>
<evidence type="ECO:0000255" key="1">
    <source>
        <dbReference type="HAMAP-Rule" id="MF_00358"/>
    </source>
</evidence>
<evidence type="ECO:0000305" key="2"/>
<comment type="similarity">
    <text evidence="1">Belongs to the bacterial ribosomal protein bS21 family.</text>
</comment>
<protein>
    <recommendedName>
        <fullName evidence="1">Small ribosomal subunit protein bS21</fullName>
    </recommendedName>
    <alternativeName>
        <fullName evidence="2">30S ribosomal protein S21</fullName>
    </alternativeName>
</protein>
<gene>
    <name evidence="1" type="primary">rpsU</name>
    <name type="ordered locus">Dshi_0246</name>
</gene>